<name>BOC_MOUSE</name>
<feature type="signal peptide" evidence="2">
    <location>
        <begin position="1"/>
        <end position="25"/>
    </location>
</feature>
<feature type="chain" id="PRO_0000234053" description="Brother of CDO">
    <location>
        <begin position="26"/>
        <end position="1110"/>
    </location>
</feature>
<feature type="topological domain" description="Extracellular" evidence="2">
    <location>
        <begin position="26"/>
        <end position="850"/>
    </location>
</feature>
<feature type="transmembrane region" description="Helical" evidence="2">
    <location>
        <begin position="851"/>
        <end position="871"/>
    </location>
</feature>
<feature type="topological domain" description="Cytoplasmic" evidence="2">
    <location>
        <begin position="872"/>
        <end position="1110"/>
    </location>
</feature>
<feature type="domain" description="Ig-like C2-type 1">
    <location>
        <begin position="31"/>
        <end position="118"/>
    </location>
</feature>
<feature type="domain" description="Ig-like C2-type 2">
    <location>
        <begin position="124"/>
        <end position="208"/>
    </location>
</feature>
<feature type="domain" description="Ig-like C2-type 3">
    <location>
        <begin position="229"/>
        <end position="310"/>
    </location>
</feature>
<feature type="domain" description="Ig-like C2-type 4">
    <location>
        <begin position="318"/>
        <end position="402"/>
    </location>
</feature>
<feature type="domain" description="Fibronectin type-III 1" evidence="4">
    <location>
        <begin position="469"/>
        <end position="566"/>
    </location>
</feature>
<feature type="domain" description="Fibronectin type-III 2" evidence="4">
    <location>
        <begin position="603"/>
        <end position="698"/>
    </location>
</feature>
<feature type="domain" description="Fibronectin type-III 3" evidence="4">
    <location>
        <begin position="707"/>
        <end position="807"/>
    </location>
</feature>
<feature type="region of interest" description="Disordered" evidence="5">
    <location>
        <begin position="407"/>
        <end position="458"/>
    </location>
</feature>
<feature type="region of interest" description="Disordered" evidence="5">
    <location>
        <begin position="561"/>
        <end position="610"/>
    </location>
</feature>
<feature type="region of interest" description="Disordered" evidence="5">
    <location>
        <begin position="809"/>
        <end position="828"/>
    </location>
</feature>
<feature type="region of interest" description="Disordered" evidence="5">
    <location>
        <begin position="1065"/>
        <end position="1110"/>
    </location>
</feature>
<feature type="compositionally biased region" description="Pro residues" evidence="5">
    <location>
        <begin position="421"/>
        <end position="430"/>
    </location>
</feature>
<feature type="compositionally biased region" description="Pro residues" evidence="5">
    <location>
        <begin position="814"/>
        <end position="828"/>
    </location>
</feature>
<feature type="compositionally biased region" description="Polar residues" evidence="5">
    <location>
        <begin position="1075"/>
        <end position="1086"/>
    </location>
</feature>
<feature type="glycosylation site" description="N-linked (GlcNAc...) asparagine" evidence="2">
    <location>
        <position position="60"/>
    </location>
</feature>
<feature type="glycosylation site" description="N-linked (GlcNAc...) asparagine" evidence="2">
    <location>
        <position position="71"/>
    </location>
</feature>
<feature type="glycosylation site" description="N-linked (GlcNAc...) asparagine" evidence="2">
    <location>
        <position position="93"/>
    </location>
</feature>
<feature type="glycosylation site" description="N-linked (GlcNAc...) asparagine" evidence="2">
    <location>
        <position position="184"/>
    </location>
</feature>
<feature type="glycosylation site" description="N-linked (GlcNAc...) asparagine" evidence="2">
    <location>
        <position position="270"/>
    </location>
</feature>
<feature type="glycosylation site" description="N-linked (GlcNAc...) asparagine" evidence="2">
    <location>
        <position position="512"/>
    </location>
</feature>
<feature type="glycosylation site" description="N-linked (GlcNAc...) asparagine" evidence="2">
    <location>
        <position position="720"/>
    </location>
</feature>
<feature type="glycosylation site" description="N-linked (GlcNAc...) asparagine" evidence="2">
    <location>
        <position position="754"/>
    </location>
</feature>
<feature type="disulfide bond" evidence="3">
    <location>
        <begin position="52"/>
        <end position="101"/>
    </location>
</feature>
<feature type="disulfide bond" evidence="3">
    <location>
        <begin position="145"/>
        <end position="195"/>
    </location>
</feature>
<feature type="disulfide bond" evidence="3">
    <location>
        <begin position="247"/>
        <end position="294"/>
    </location>
</feature>
<feature type="disulfide bond" evidence="3">
    <location>
        <begin position="339"/>
        <end position="386"/>
    </location>
</feature>
<feature type="splice variant" id="VSP_018197" description="In isoform 2." evidence="12">
    <location>
        <begin position="1"/>
        <end position="680"/>
    </location>
</feature>
<feature type="splice variant" id="VSP_018198" description="In isoform 3." evidence="10 11 12">
    <location>
        <position position="449"/>
    </location>
</feature>
<feature type="splice variant" id="VSP_018199" description="In isoform 4." evidence="10 11 12 13">
    <location>
        <position position="958"/>
    </location>
</feature>
<feature type="splice variant" id="VSP_018200" description="In isoform 2." evidence="12">
    <location>
        <begin position="985"/>
        <end position="1109"/>
    </location>
</feature>
<feature type="sequence variant" description="In strain: C57BL/6." evidence="8 9">
    <original>R</original>
    <variation>Q</variation>
    <location>
        <position position="1051"/>
    </location>
</feature>
<feature type="sequence conflict" description="In Ref. 3." evidence="14" ref="3">
    <original>P</original>
    <variation>A</variation>
    <location>
        <position position="9"/>
    </location>
</feature>
<feature type="sequence conflict" description="In Ref. 2; AAH78631." evidence="14" ref="2">
    <original>L</original>
    <variation>P</variation>
    <location>
        <position position="24"/>
    </location>
</feature>
<feature type="sequence conflict" description="In Ref. 3; AAK71999." evidence="14" ref="3">
    <original>R</original>
    <variation>G</variation>
    <location>
        <position position="64"/>
    </location>
</feature>
<feature type="sequence conflict" description="In Ref. 3; AAK71999." evidence="14" ref="3">
    <original>D</original>
    <variation>E</variation>
    <location>
        <position position="74"/>
    </location>
</feature>
<feature type="sequence conflict" description="In Ref. 3; AAK71999." evidence="14" ref="3">
    <original>T</original>
    <variation>N</variation>
    <location>
        <position position="85"/>
    </location>
</feature>
<feature type="sequence conflict" description="In Ref. 3; AAK71999." evidence="14" ref="3">
    <original>M</original>
    <variation>L</variation>
    <location>
        <position position="105"/>
    </location>
</feature>
<feature type="sequence conflict" description="In Ref. 2; AAH62892." evidence="14" ref="2">
    <original>G</original>
    <variation>V</variation>
    <location>
        <position position="304"/>
    </location>
</feature>
<feature type="sequence conflict" description="In Ref. 4; BAD21432." evidence="14" ref="4">
    <original>P</original>
    <variation>S</variation>
    <location>
        <position position="453"/>
    </location>
</feature>
<feature type="sequence conflict" description="In Ref. 1; BAC26110." evidence="14" ref="1">
    <original>K</original>
    <variation>E</variation>
    <location>
        <position position="878"/>
    </location>
</feature>
<feature type="strand" evidence="16">
    <location>
        <begin position="595"/>
        <end position="597"/>
    </location>
</feature>
<feature type="strand" evidence="16">
    <location>
        <begin position="608"/>
        <end position="611"/>
    </location>
</feature>
<feature type="strand" evidence="16">
    <location>
        <begin position="614"/>
        <end position="620"/>
    </location>
</feature>
<feature type="strand" evidence="16">
    <location>
        <begin position="633"/>
        <end position="643"/>
    </location>
</feature>
<feature type="strand" evidence="16">
    <location>
        <begin position="648"/>
        <end position="654"/>
    </location>
</feature>
<feature type="strand" evidence="16">
    <location>
        <begin position="660"/>
        <end position="665"/>
    </location>
</feature>
<feature type="strand" evidence="16">
    <location>
        <begin position="671"/>
        <end position="680"/>
    </location>
</feature>
<feature type="strand" evidence="15">
    <location>
        <begin position="712"/>
        <end position="717"/>
    </location>
</feature>
<feature type="strand" evidence="15">
    <location>
        <begin position="719"/>
        <end position="722"/>
    </location>
</feature>
<feature type="strand" evidence="15">
    <location>
        <begin position="724"/>
        <end position="729"/>
    </location>
</feature>
<feature type="strand" evidence="15">
    <location>
        <begin position="742"/>
        <end position="747"/>
    </location>
</feature>
<feature type="helix" evidence="15">
    <location>
        <begin position="755"/>
        <end position="757"/>
    </location>
</feature>
<feature type="strand" evidence="15">
    <location>
        <begin position="761"/>
        <end position="764"/>
    </location>
</feature>
<feature type="strand" evidence="15">
    <location>
        <begin position="769"/>
        <end position="772"/>
    </location>
</feature>
<feature type="strand" evidence="15">
    <location>
        <begin position="780"/>
        <end position="788"/>
    </location>
</feature>
<feature type="strand" evidence="15">
    <location>
        <begin position="800"/>
        <end position="803"/>
    </location>
</feature>
<keyword id="KW-0002">3D-structure</keyword>
<keyword id="KW-0025">Alternative splicing</keyword>
<keyword id="KW-0130">Cell adhesion</keyword>
<keyword id="KW-1015">Disulfide bond</keyword>
<keyword id="KW-0325">Glycoprotein</keyword>
<keyword id="KW-0393">Immunoglobulin domain</keyword>
<keyword id="KW-0472">Membrane</keyword>
<keyword id="KW-1185">Reference proteome</keyword>
<keyword id="KW-0677">Repeat</keyword>
<keyword id="KW-0732">Signal</keyword>
<keyword id="KW-0812">Transmembrane</keyword>
<keyword id="KW-1133">Transmembrane helix</keyword>
<proteinExistence type="evidence at protein level"/>
<dbReference type="EMBL" id="AK028770">
    <property type="protein sequence ID" value="BAC26110.1"/>
    <property type="molecule type" value="mRNA"/>
</dbReference>
<dbReference type="EMBL" id="AK028889">
    <property type="protein sequence ID" value="BAC26176.1"/>
    <property type="molecule type" value="mRNA"/>
</dbReference>
<dbReference type="EMBL" id="BC026443">
    <property type="protein sequence ID" value="AAH26443.1"/>
    <property type="molecule type" value="mRNA"/>
</dbReference>
<dbReference type="EMBL" id="BC056138">
    <property type="protein sequence ID" value="AAH56138.1"/>
    <property type="molecule type" value="mRNA"/>
</dbReference>
<dbReference type="EMBL" id="BC062892">
    <property type="protein sequence ID" value="AAH62892.1"/>
    <property type="molecule type" value="mRNA"/>
</dbReference>
<dbReference type="EMBL" id="BC078631">
    <property type="protein sequence ID" value="AAH78631.1"/>
    <property type="molecule type" value="mRNA"/>
</dbReference>
<dbReference type="EMBL" id="AF388037">
    <property type="protein sequence ID" value="AAK71999.1"/>
    <property type="status" value="ALT_FRAME"/>
    <property type="molecule type" value="mRNA"/>
</dbReference>
<dbReference type="EMBL" id="AK131182">
    <property type="protein sequence ID" value="BAD21432.1"/>
    <property type="molecule type" value="Transcribed_RNA"/>
</dbReference>
<dbReference type="CCDS" id="CCDS28186.1">
    <molecule id="Q6AZB0-1"/>
</dbReference>
<dbReference type="RefSeq" id="NP_766094.1">
    <property type="nucleotide sequence ID" value="NM_172506.2"/>
</dbReference>
<dbReference type="PDB" id="1X4Y">
    <property type="method" value="NMR"/>
    <property type="chains" value="A=707-807"/>
</dbReference>
<dbReference type="PDB" id="1X4Z">
    <property type="method" value="NMR"/>
    <property type="chains" value="A=591-698"/>
</dbReference>
<dbReference type="PDBsum" id="1X4Y"/>
<dbReference type="PDBsum" id="1X4Z"/>
<dbReference type="SMR" id="Q6AZB0"/>
<dbReference type="BioGRID" id="228240">
    <property type="interactions" value="2"/>
</dbReference>
<dbReference type="CORUM" id="Q6AZB0"/>
<dbReference type="DIP" id="DIP-60410N"/>
<dbReference type="FunCoup" id="Q6AZB0">
    <property type="interactions" value="224"/>
</dbReference>
<dbReference type="IntAct" id="Q6AZB0">
    <property type="interactions" value="2"/>
</dbReference>
<dbReference type="STRING" id="10090.ENSMUSP00000110281"/>
<dbReference type="GlyCosmos" id="Q6AZB0">
    <property type="glycosylation" value="8 sites, No reported glycans"/>
</dbReference>
<dbReference type="GlyGen" id="Q6AZB0">
    <property type="glycosylation" value="9 sites, 2 N-linked glycans (4 sites)"/>
</dbReference>
<dbReference type="iPTMnet" id="Q6AZB0"/>
<dbReference type="PhosphoSitePlus" id="Q6AZB0"/>
<dbReference type="jPOST" id="Q6AZB0"/>
<dbReference type="PaxDb" id="10090-ENSMUSP00000023370"/>
<dbReference type="PeptideAtlas" id="Q6AZB0"/>
<dbReference type="ProteomicsDB" id="273753">
    <molecule id="Q6AZB0-1"/>
</dbReference>
<dbReference type="ProteomicsDB" id="273754">
    <molecule id="Q6AZB0-2"/>
</dbReference>
<dbReference type="ProteomicsDB" id="273755">
    <molecule id="Q6AZB0-3"/>
</dbReference>
<dbReference type="ProteomicsDB" id="273756">
    <molecule id="Q6AZB0-4"/>
</dbReference>
<dbReference type="Pumba" id="Q6AZB0"/>
<dbReference type="DNASU" id="117606"/>
<dbReference type="GeneID" id="117606"/>
<dbReference type="KEGG" id="mmu:117606"/>
<dbReference type="UCSC" id="uc007zhl.1">
    <molecule id="Q6AZB0-1"/>
    <property type="organism name" value="mouse"/>
</dbReference>
<dbReference type="UCSC" id="uc007zhm.1">
    <molecule id="Q6AZB0-4"/>
    <property type="organism name" value="mouse"/>
</dbReference>
<dbReference type="AGR" id="MGI:2151153"/>
<dbReference type="CTD" id="91653"/>
<dbReference type="MGI" id="MGI:2151153">
    <property type="gene designation" value="Boc"/>
</dbReference>
<dbReference type="eggNOG" id="ENOG502QUNT">
    <property type="taxonomic scope" value="Eukaryota"/>
</dbReference>
<dbReference type="InParanoid" id="Q6AZB0"/>
<dbReference type="OrthoDB" id="9998697at2759"/>
<dbReference type="PhylomeDB" id="Q6AZB0"/>
<dbReference type="TreeFam" id="TF332268"/>
<dbReference type="Reactome" id="R-MMU-525793">
    <property type="pathway name" value="Myogenesis"/>
</dbReference>
<dbReference type="Reactome" id="R-MMU-5635838">
    <property type="pathway name" value="Activation of SMO"/>
</dbReference>
<dbReference type="BioGRID-ORCS" id="117606">
    <property type="hits" value="1 hit in 79 CRISPR screens"/>
</dbReference>
<dbReference type="ChiTaRS" id="Boc">
    <property type="organism name" value="mouse"/>
</dbReference>
<dbReference type="EvolutionaryTrace" id="Q6AZB0"/>
<dbReference type="PRO" id="PR:Q6AZB0"/>
<dbReference type="Proteomes" id="UP000000589">
    <property type="component" value="Unplaced"/>
</dbReference>
<dbReference type="RNAct" id="Q6AZB0">
    <property type="molecule type" value="protein"/>
</dbReference>
<dbReference type="GO" id="GO:0030424">
    <property type="term" value="C:axon"/>
    <property type="evidence" value="ECO:0000314"/>
    <property type="project" value="MGI"/>
</dbReference>
<dbReference type="GO" id="GO:0009986">
    <property type="term" value="C:cell surface"/>
    <property type="evidence" value="ECO:0000304"/>
    <property type="project" value="HGNC-UCL"/>
</dbReference>
<dbReference type="GO" id="GO:0030426">
    <property type="term" value="C:growth cone"/>
    <property type="evidence" value="ECO:0000314"/>
    <property type="project" value="MGI"/>
</dbReference>
<dbReference type="GO" id="GO:0043025">
    <property type="term" value="C:neuronal cell body"/>
    <property type="evidence" value="ECO:0000314"/>
    <property type="project" value="MGI"/>
</dbReference>
<dbReference type="GO" id="GO:0005886">
    <property type="term" value="C:plasma membrane"/>
    <property type="evidence" value="ECO:0000247"/>
    <property type="project" value="MGI"/>
</dbReference>
<dbReference type="GO" id="GO:0007411">
    <property type="term" value="P:axon guidance"/>
    <property type="evidence" value="ECO:0000315"/>
    <property type="project" value="MGI"/>
</dbReference>
<dbReference type="GO" id="GO:0030030">
    <property type="term" value="P:cell projection organization"/>
    <property type="evidence" value="ECO:0000315"/>
    <property type="project" value="MGI"/>
</dbReference>
<dbReference type="GO" id="GO:0098609">
    <property type="term" value="P:cell-cell adhesion"/>
    <property type="evidence" value="ECO:0000304"/>
    <property type="project" value="HGNC-UCL"/>
</dbReference>
<dbReference type="GO" id="GO:0045663">
    <property type="term" value="P:positive regulation of myoblast differentiation"/>
    <property type="evidence" value="ECO:0000315"/>
    <property type="project" value="HGNC-UCL"/>
</dbReference>
<dbReference type="GO" id="GO:0016202">
    <property type="term" value="P:regulation of striated muscle tissue development"/>
    <property type="evidence" value="ECO:0000266"/>
    <property type="project" value="MGI"/>
</dbReference>
<dbReference type="GO" id="GO:0007224">
    <property type="term" value="P:smoothened signaling pathway"/>
    <property type="evidence" value="ECO:0000314"/>
    <property type="project" value="MGI"/>
</dbReference>
<dbReference type="CDD" id="cd00063">
    <property type="entry name" value="FN3"/>
    <property type="match status" value="3"/>
</dbReference>
<dbReference type="FunFam" id="2.60.40.10:FF:000655">
    <property type="entry name" value="brother of CDO isoform X1"/>
    <property type="match status" value="1"/>
</dbReference>
<dbReference type="FunFam" id="2.60.40.10:FF:000737">
    <property type="entry name" value="brother of CDO isoform X1"/>
    <property type="match status" value="1"/>
</dbReference>
<dbReference type="FunFam" id="2.60.40.10:FF:000852">
    <property type="entry name" value="brother of CDO isoform X1"/>
    <property type="match status" value="1"/>
</dbReference>
<dbReference type="FunFam" id="2.60.40.10:FF:001263">
    <property type="entry name" value="brother of CDO isoform X1"/>
    <property type="match status" value="1"/>
</dbReference>
<dbReference type="FunFam" id="2.60.40.10:FF:000205">
    <property type="entry name" value="Cell adhesion associated, oncogene regulated"/>
    <property type="match status" value="1"/>
</dbReference>
<dbReference type="FunFam" id="2.60.40.10:FF:000327">
    <property type="entry name" value="Cell adhesion associated, oncogene regulated"/>
    <property type="match status" value="1"/>
</dbReference>
<dbReference type="FunFam" id="2.60.40.10:FF:000352">
    <property type="entry name" value="Cell adhesion molecule-related/down-regulated by oncogenes"/>
    <property type="match status" value="1"/>
</dbReference>
<dbReference type="Gene3D" id="2.60.40.10">
    <property type="entry name" value="Immunoglobulins"/>
    <property type="match status" value="7"/>
</dbReference>
<dbReference type="InterPro" id="IPR003961">
    <property type="entry name" value="FN3_dom"/>
</dbReference>
<dbReference type="InterPro" id="IPR036116">
    <property type="entry name" value="FN3_sf"/>
</dbReference>
<dbReference type="InterPro" id="IPR007110">
    <property type="entry name" value="Ig-like_dom"/>
</dbReference>
<dbReference type="InterPro" id="IPR036179">
    <property type="entry name" value="Ig-like_dom_sf"/>
</dbReference>
<dbReference type="InterPro" id="IPR013783">
    <property type="entry name" value="Ig-like_fold"/>
</dbReference>
<dbReference type="InterPro" id="IPR013098">
    <property type="entry name" value="Ig_I-set"/>
</dbReference>
<dbReference type="InterPro" id="IPR003599">
    <property type="entry name" value="Ig_sub"/>
</dbReference>
<dbReference type="InterPro" id="IPR003598">
    <property type="entry name" value="Ig_sub2"/>
</dbReference>
<dbReference type="PANTHER" id="PTHR44170:SF3">
    <property type="entry name" value="BROTHER OF CDO"/>
    <property type="match status" value="1"/>
</dbReference>
<dbReference type="PANTHER" id="PTHR44170">
    <property type="entry name" value="PROTEIN SIDEKICK"/>
    <property type="match status" value="1"/>
</dbReference>
<dbReference type="Pfam" id="PF00041">
    <property type="entry name" value="fn3"/>
    <property type="match status" value="3"/>
</dbReference>
<dbReference type="Pfam" id="PF07679">
    <property type="entry name" value="I-set"/>
    <property type="match status" value="3"/>
</dbReference>
<dbReference type="Pfam" id="PF13927">
    <property type="entry name" value="Ig_3"/>
    <property type="match status" value="1"/>
</dbReference>
<dbReference type="Pfam" id="PF16625">
    <property type="entry name" value="ISET-FN3_linker"/>
    <property type="match status" value="1"/>
</dbReference>
<dbReference type="SMART" id="SM00060">
    <property type="entry name" value="FN3"/>
    <property type="match status" value="3"/>
</dbReference>
<dbReference type="SMART" id="SM00409">
    <property type="entry name" value="IG"/>
    <property type="match status" value="4"/>
</dbReference>
<dbReference type="SMART" id="SM00408">
    <property type="entry name" value="IGc2"/>
    <property type="match status" value="4"/>
</dbReference>
<dbReference type="SUPFAM" id="SSF49265">
    <property type="entry name" value="Fibronectin type III"/>
    <property type="match status" value="2"/>
</dbReference>
<dbReference type="SUPFAM" id="SSF48726">
    <property type="entry name" value="Immunoglobulin"/>
    <property type="match status" value="4"/>
</dbReference>
<dbReference type="PROSITE" id="PS50853">
    <property type="entry name" value="FN3"/>
    <property type="match status" value="3"/>
</dbReference>
<dbReference type="PROSITE" id="PS50835">
    <property type="entry name" value="IG_LIKE"/>
    <property type="match status" value="4"/>
</dbReference>
<reference key="1">
    <citation type="journal article" date="2005" name="Science">
        <title>The transcriptional landscape of the mammalian genome.</title>
        <authorList>
            <person name="Carninci P."/>
            <person name="Kasukawa T."/>
            <person name="Katayama S."/>
            <person name="Gough J."/>
            <person name="Frith M.C."/>
            <person name="Maeda N."/>
            <person name="Oyama R."/>
            <person name="Ravasi T."/>
            <person name="Lenhard B."/>
            <person name="Wells C."/>
            <person name="Kodzius R."/>
            <person name="Shimokawa K."/>
            <person name="Bajic V.B."/>
            <person name="Brenner S.E."/>
            <person name="Batalov S."/>
            <person name="Forrest A.R."/>
            <person name="Zavolan M."/>
            <person name="Davis M.J."/>
            <person name="Wilming L.G."/>
            <person name="Aidinis V."/>
            <person name="Allen J.E."/>
            <person name="Ambesi-Impiombato A."/>
            <person name="Apweiler R."/>
            <person name="Aturaliya R.N."/>
            <person name="Bailey T.L."/>
            <person name="Bansal M."/>
            <person name="Baxter L."/>
            <person name="Beisel K.W."/>
            <person name="Bersano T."/>
            <person name="Bono H."/>
            <person name="Chalk A.M."/>
            <person name="Chiu K.P."/>
            <person name="Choudhary V."/>
            <person name="Christoffels A."/>
            <person name="Clutterbuck D.R."/>
            <person name="Crowe M.L."/>
            <person name="Dalla E."/>
            <person name="Dalrymple B.P."/>
            <person name="de Bono B."/>
            <person name="Della Gatta G."/>
            <person name="di Bernardo D."/>
            <person name="Down T."/>
            <person name="Engstrom P."/>
            <person name="Fagiolini M."/>
            <person name="Faulkner G."/>
            <person name="Fletcher C.F."/>
            <person name="Fukushima T."/>
            <person name="Furuno M."/>
            <person name="Futaki S."/>
            <person name="Gariboldi M."/>
            <person name="Georgii-Hemming P."/>
            <person name="Gingeras T.R."/>
            <person name="Gojobori T."/>
            <person name="Green R.E."/>
            <person name="Gustincich S."/>
            <person name="Harbers M."/>
            <person name="Hayashi Y."/>
            <person name="Hensch T.K."/>
            <person name="Hirokawa N."/>
            <person name="Hill D."/>
            <person name="Huminiecki L."/>
            <person name="Iacono M."/>
            <person name="Ikeo K."/>
            <person name="Iwama A."/>
            <person name="Ishikawa T."/>
            <person name="Jakt M."/>
            <person name="Kanapin A."/>
            <person name="Katoh M."/>
            <person name="Kawasawa Y."/>
            <person name="Kelso J."/>
            <person name="Kitamura H."/>
            <person name="Kitano H."/>
            <person name="Kollias G."/>
            <person name="Krishnan S.P."/>
            <person name="Kruger A."/>
            <person name="Kummerfeld S.K."/>
            <person name="Kurochkin I.V."/>
            <person name="Lareau L.F."/>
            <person name="Lazarevic D."/>
            <person name="Lipovich L."/>
            <person name="Liu J."/>
            <person name="Liuni S."/>
            <person name="McWilliam S."/>
            <person name="Madan Babu M."/>
            <person name="Madera M."/>
            <person name="Marchionni L."/>
            <person name="Matsuda H."/>
            <person name="Matsuzawa S."/>
            <person name="Miki H."/>
            <person name="Mignone F."/>
            <person name="Miyake S."/>
            <person name="Morris K."/>
            <person name="Mottagui-Tabar S."/>
            <person name="Mulder N."/>
            <person name="Nakano N."/>
            <person name="Nakauchi H."/>
            <person name="Ng P."/>
            <person name="Nilsson R."/>
            <person name="Nishiguchi S."/>
            <person name="Nishikawa S."/>
            <person name="Nori F."/>
            <person name="Ohara O."/>
            <person name="Okazaki Y."/>
            <person name="Orlando V."/>
            <person name="Pang K.C."/>
            <person name="Pavan W.J."/>
            <person name="Pavesi G."/>
            <person name="Pesole G."/>
            <person name="Petrovsky N."/>
            <person name="Piazza S."/>
            <person name="Reed J."/>
            <person name="Reid J.F."/>
            <person name="Ring B.Z."/>
            <person name="Ringwald M."/>
            <person name="Rost B."/>
            <person name="Ruan Y."/>
            <person name="Salzberg S.L."/>
            <person name="Sandelin A."/>
            <person name="Schneider C."/>
            <person name="Schoenbach C."/>
            <person name="Sekiguchi K."/>
            <person name="Semple C.A."/>
            <person name="Seno S."/>
            <person name="Sessa L."/>
            <person name="Sheng Y."/>
            <person name="Shibata Y."/>
            <person name="Shimada H."/>
            <person name="Shimada K."/>
            <person name="Silva D."/>
            <person name="Sinclair B."/>
            <person name="Sperling S."/>
            <person name="Stupka E."/>
            <person name="Sugiura K."/>
            <person name="Sultana R."/>
            <person name="Takenaka Y."/>
            <person name="Taki K."/>
            <person name="Tammoja K."/>
            <person name="Tan S.L."/>
            <person name="Tang S."/>
            <person name="Taylor M.S."/>
            <person name="Tegner J."/>
            <person name="Teichmann S.A."/>
            <person name="Ueda H.R."/>
            <person name="van Nimwegen E."/>
            <person name="Verardo R."/>
            <person name="Wei C.L."/>
            <person name="Yagi K."/>
            <person name="Yamanishi H."/>
            <person name="Zabarovsky E."/>
            <person name="Zhu S."/>
            <person name="Zimmer A."/>
            <person name="Hide W."/>
            <person name="Bult C."/>
            <person name="Grimmond S.M."/>
            <person name="Teasdale R.D."/>
            <person name="Liu E.T."/>
            <person name="Brusic V."/>
            <person name="Quackenbush J."/>
            <person name="Wahlestedt C."/>
            <person name="Mattick J.S."/>
            <person name="Hume D.A."/>
            <person name="Kai C."/>
            <person name="Sasaki D."/>
            <person name="Tomaru Y."/>
            <person name="Fukuda S."/>
            <person name="Kanamori-Katayama M."/>
            <person name="Suzuki M."/>
            <person name="Aoki J."/>
            <person name="Arakawa T."/>
            <person name="Iida J."/>
            <person name="Imamura K."/>
            <person name="Itoh M."/>
            <person name="Kato T."/>
            <person name="Kawaji H."/>
            <person name="Kawagashira N."/>
            <person name="Kawashima T."/>
            <person name="Kojima M."/>
            <person name="Kondo S."/>
            <person name="Konno H."/>
            <person name="Nakano K."/>
            <person name="Ninomiya N."/>
            <person name="Nishio T."/>
            <person name="Okada M."/>
            <person name="Plessy C."/>
            <person name="Shibata K."/>
            <person name="Shiraki T."/>
            <person name="Suzuki S."/>
            <person name="Tagami M."/>
            <person name="Waki K."/>
            <person name="Watahiki A."/>
            <person name="Okamura-Oho Y."/>
            <person name="Suzuki H."/>
            <person name="Kawai J."/>
            <person name="Hayashizaki Y."/>
        </authorList>
    </citation>
    <scope>NUCLEOTIDE SEQUENCE [LARGE SCALE MRNA] (ISOFORMS 1 AND 4)</scope>
    <scope>VARIANT GLN-1051</scope>
    <source>
        <strain>C57BL/6J</strain>
        <tissue>Skin</tissue>
    </source>
</reference>
<reference key="2">
    <citation type="journal article" date="2004" name="Genome Res.">
        <title>The status, quality, and expansion of the NIH full-length cDNA project: the Mammalian Gene Collection (MGC).</title>
        <authorList>
            <consortium name="The MGC Project Team"/>
        </authorList>
    </citation>
    <scope>NUCLEOTIDE SEQUENCE [LARGE SCALE MRNA] (ISOFORMS 1; 2; 3 AND 4)</scope>
    <scope>VARIANT GLN-1051</scope>
    <source>
        <strain>C57BL/6J</strain>
        <strain>FVB/N-3</strain>
        <tissue>Fetal brain</tissue>
        <tissue>Mammary gland</tissue>
        <tissue>Mammary tumor</tissue>
    </source>
</reference>
<reference key="3">
    <citation type="journal article" date="2002" name="EMBO J.">
        <title>BOC, an Ig superfamily member, associates with CDO to positively regulate myogenic differentiation.</title>
        <authorList>
            <person name="Kang J.-S."/>
            <person name="Mulieri P.J."/>
            <person name="Hu Y."/>
            <person name="Taliana L."/>
            <person name="Krauss R.S."/>
        </authorList>
    </citation>
    <scope>NUCLEOTIDE SEQUENCE [MRNA] OF 8-1109 (ISOFORMS 1; 3 AND 4)</scope>
    <scope>INDUCTION</scope>
    <scope>TISSUE SPECIFICITY</scope>
</reference>
<reference key="4">
    <citation type="journal article" date="2004" name="DNA Res.">
        <title>Prediction of the coding sequences of mouse homologues of FLJ genes: the complete nucleotide sequences of 110 mouse FLJ-homologous cDNAs identified by screening of terminal sequences of cDNA clones randomly sampled from size-fractionated libraries.</title>
        <authorList>
            <person name="Okazaki N."/>
            <person name="Kikuno R."/>
            <person name="Ohara R."/>
            <person name="Inamoto S."/>
            <person name="Koseki H."/>
            <person name="Hiraoka S."/>
            <person name="Saga Y."/>
            <person name="Kitamura H."/>
            <person name="Nakagawa T."/>
            <person name="Nagase T."/>
            <person name="Ohara O."/>
            <person name="Koga H."/>
        </authorList>
    </citation>
    <scope>NUCLEOTIDE SEQUENCE [LARGE SCALE MRNA] OF 178-1109 (ISOFORMS 1; 3 AND 4)</scope>
    <source>
        <tissue>Brain</tissue>
    </source>
</reference>
<reference key="5">
    <citation type="journal article" date="2003" name="Proc. Natl. Acad. Sci. U.S.A.">
        <title>Promyogenic members of the Ig and cadherin families associate to positively regulate differentiation.</title>
        <authorList>
            <person name="Kang J.-S."/>
            <person name="Feinleib J.L."/>
            <person name="Knox S."/>
            <person name="Ketteringham M.A."/>
            <person name="Krauss R.S."/>
        </authorList>
    </citation>
    <scope>IDENTIFICATION IN A COMPLEX WITH CDON; CDH2; CDH15 AND CTNNB1</scope>
</reference>
<reference key="6">
    <citation type="submission" date="2005-11" db="PDB data bank">
        <title>Solution structure of the 2nd and 3rd fibronectin type III domain from mouse biregional cell adhesion molecule-related/down-regulated oncogenes (CDON) binding protein.</title>
        <authorList>
            <consortium name="RIKEN structural genomics initiative (RSGI)"/>
        </authorList>
    </citation>
    <scope>STRUCTURE BY NMR OF 589-807</scope>
</reference>
<organism>
    <name type="scientific">Mus musculus</name>
    <name type="common">Mouse</name>
    <dbReference type="NCBI Taxonomy" id="10090"/>
    <lineage>
        <taxon>Eukaryota</taxon>
        <taxon>Metazoa</taxon>
        <taxon>Chordata</taxon>
        <taxon>Craniata</taxon>
        <taxon>Vertebrata</taxon>
        <taxon>Euteleostomi</taxon>
        <taxon>Mammalia</taxon>
        <taxon>Eutheria</taxon>
        <taxon>Euarchontoglires</taxon>
        <taxon>Glires</taxon>
        <taxon>Rodentia</taxon>
        <taxon>Myomorpha</taxon>
        <taxon>Muroidea</taxon>
        <taxon>Muridae</taxon>
        <taxon>Murinae</taxon>
        <taxon>Mus</taxon>
        <taxon>Mus</taxon>
    </lineage>
</organism>
<comment type="function">
    <text>Component of a cell-surface receptor complex that mediates cell-cell interactions between muscle precursor cells. Promotes differentiation of myogenic cells.</text>
</comment>
<comment type="subunit">
    <text evidence="1 7">Part of a complex that contains BOC, CDON, NEO1, cadherins and CTNNB1. Interacts with SHH, DHH and IHH. Interacts with NTN3 (By similarity). Interacts with CDH2 and CTNNB1. Interacts with CDH15 only during the early stages of myoblast differentiation.</text>
</comment>
<comment type="interaction">
    <interactant intactId="EBI-15610126">
        <id>Q6AZB0</id>
    </interactant>
    <interactant intactId="EBI-15729104">
        <id>Q01721</id>
        <label>Gas1</label>
    </interactant>
    <organismsDiffer>false</organismsDiffer>
    <experiments>2</experiments>
</comment>
<comment type="subcellular location">
    <subcellularLocation>
        <location evidence="1">Membrane</location>
        <topology evidence="1">Single-pass type I membrane protein</topology>
    </subcellularLocation>
</comment>
<comment type="alternative products">
    <event type="alternative splicing"/>
    <isoform>
        <id>Q6AZB0-1</id>
        <name>1</name>
        <sequence type="displayed"/>
    </isoform>
    <isoform>
        <id>Q6AZB0-2</id>
        <name>2</name>
        <sequence type="described" ref="VSP_018197 VSP_018200"/>
    </isoform>
    <isoform>
        <id>Q6AZB0-3</id>
        <name>3</name>
        <sequence type="described" ref="VSP_018198"/>
    </isoform>
    <isoform>
        <id>Q6AZB0-4</id>
        <name>4</name>
        <sequence type="described" ref="VSP_018199"/>
    </isoform>
</comment>
<comment type="tissue specificity">
    <text evidence="6">Highly expressed in embryonic somites, limb buds, dermomyotomes and in the neural tube.</text>
</comment>
<comment type="induction">
    <text evidence="6">Up-regulated during early stages of myoblast differentiation.</text>
</comment>
<comment type="sequence caution" evidence="14">
    <conflict type="frameshift">
        <sequence resource="EMBL-CDS" id="AAK71999"/>
    </conflict>
</comment>
<gene>
    <name type="primary">Boc</name>
</gene>
<evidence type="ECO:0000250" key="1"/>
<evidence type="ECO:0000255" key="2"/>
<evidence type="ECO:0000255" key="3">
    <source>
        <dbReference type="PROSITE-ProRule" id="PRU00114"/>
    </source>
</evidence>
<evidence type="ECO:0000255" key="4">
    <source>
        <dbReference type="PROSITE-ProRule" id="PRU00316"/>
    </source>
</evidence>
<evidence type="ECO:0000256" key="5">
    <source>
        <dbReference type="SAM" id="MobiDB-lite"/>
    </source>
</evidence>
<evidence type="ECO:0000269" key="6">
    <source>
    </source>
</evidence>
<evidence type="ECO:0000269" key="7">
    <source>
    </source>
</evidence>
<evidence type="ECO:0000269" key="8">
    <source>
    </source>
</evidence>
<evidence type="ECO:0000269" key="9">
    <source>
    </source>
</evidence>
<evidence type="ECO:0000303" key="10">
    <source>
    </source>
</evidence>
<evidence type="ECO:0000303" key="11">
    <source>
    </source>
</evidence>
<evidence type="ECO:0000303" key="12">
    <source>
    </source>
</evidence>
<evidence type="ECO:0000303" key="13">
    <source>
    </source>
</evidence>
<evidence type="ECO:0000305" key="14"/>
<evidence type="ECO:0007829" key="15">
    <source>
        <dbReference type="PDB" id="1X4Y"/>
    </source>
</evidence>
<evidence type="ECO:0007829" key="16">
    <source>
        <dbReference type="PDB" id="1X4Z"/>
    </source>
</evidence>
<protein>
    <recommendedName>
        <fullName>Brother of CDO</fullName>
        <shortName>Protein BOC</shortName>
    </recommendedName>
</protein>
<accession>Q6AZB0</accession>
<accession>Q6KAM5</accession>
<accession>Q6P5H3</accession>
<accession>Q7TMJ3</accession>
<accession>Q8CE73</accession>
<accession>Q8CE91</accession>
<accession>Q8R377</accession>
<accession>Q923W7</accession>
<sequence length="1110" mass="121331">MTTCRRERPILTLLWILMATAGCLADLNEVPQVTVQPMSTVQKLGGTVILGCVVEPPWMNVTWRFNGKELNGSDDALGVFITRGTLVIAALNNHTVGRYQCVARMPAGAVASVPATVTLANLQDFKLDVQHVIEVDEGNTAVIACHLPESHPKAQVRYSVKQEWLEASRDNYLIMPSGNLQIVNASQEDEGMYKCAAYNPVTQEVKTSGSGDRLRVRRSTAEAARIIYPLEAQTVIVTKGQSLILECVASGIPPPRVTWAKDGSSIAAYNKTRFLLSNLLIDTTSEEDSGTYRCMASNGVGDPGAAVILYNVQVFEPPEVTVELSQLVIPWGQSAKLTCEVRGNPPPSVLWLRNAVPLTSSQRLRLSRRALRVVSVGPEDEGVYQCMAENAVGSAHAVVQLRTARPDTTLRPGRDTKPIAATPPMPPSRPSRPDQMLREQPGLVKPPTSSVQPTSLKCPGEEQVAPAEAPIILSSPRTSKTDSYELVWRPRHEGSSRTPILYYVVKHRKVTNSSDDWTISGIPANQHRLTLTRLDPGSLYEVEMAAYNCAGEGQTAMVTFRTGRRPKPEIVASKEQQIQRDDPGASLQSSSQPDHGRLSPPEAPDRPTISTASETSVYVTWIPRGNGGFPIQSFRVEYKKLKKVGDWILATSAIPPSRLSVEITGLEKGISYKFRVRALNMLGESEPSAPSRPYVVSGYSGRVYERPVAGPYITFTDAVNETTIMLKWMYIPASNNNTPIHGFYIYYRPTDSDNDSDYKKDMVEGDRYWHSISHLQPETSYDIKMQCFNEGGESEFSNVMICETKARKFSGQPGRPPPLTLAPPQPPPLETMERPVGTGAMVARASDLPYLIVGVVLGSIVLIIVTFIPFCLWRAWSKQKHTTDLGFPRSALLSSSCQYTMVPLEGLPGHQANGQPYLGGVSGRACVSRVHGSRGCPAATVGCPGRKPQQHCPGELAQQREDTNSQLRQPIVSNGYDLQNQQVARGPQCASGVGAFLYTLPDDSTHQLLQPQDCCHLQKQPVTTCQTAVRRTSESPGLESSWDPPYHSGPRCCLGLVPVEEVDSSDSCQVGGGDWSSQHPSGTYTGQERGMRFSPSPSVHVSFETPPPTI</sequence>